<evidence type="ECO:0000255" key="1">
    <source>
        <dbReference type="HAMAP-Rule" id="MF_01358"/>
    </source>
</evidence>
<keyword id="KW-0997">Cell inner membrane</keyword>
<keyword id="KW-1003">Cell membrane</keyword>
<keyword id="KW-0472">Membrane</keyword>
<keyword id="KW-0520">NAD</keyword>
<keyword id="KW-0521">NADP</keyword>
<keyword id="KW-0618">Plastoquinone</keyword>
<keyword id="KW-0874">Quinone</keyword>
<keyword id="KW-1185">Reference proteome</keyword>
<keyword id="KW-1278">Translocase</keyword>
<keyword id="KW-0813">Transport</keyword>
<accession>Q7NI01</accession>
<feature type="chain" id="PRO_0000371873" description="NAD(P)H-quinone oxidoreductase subunit H 2">
    <location>
        <begin position="1"/>
        <end position="394"/>
    </location>
</feature>
<gene>
    <name evidence="1" type="primary">ndhH2</name>
    <name type="ordered locus">gll2383</name>
</gene>
<name>NDHH2_GLOVI</name>
<organism>
    <name type="scientific">Gloeobacter violaceus (strain ATCC 29082 / PCC 7421)</name>
    <dbReference type="NCBI Taxonomy" id="251221"/>
    <lineage>
        <taxon>Bacteria</taxon>
        <taxon>Bacillati</taxon>
        <taxon>Cyanobacteriota</taxon>
        <taxon>Cyanophyceae</taxon>
        <taxon>Gloeobacterales</taxon>
        <taxon>Gloeobacteraceae</taxon>
        <taxon>Gloeobacter</taxon>
    </lineage>
</organism>
<proteinExistence type="inferred from homology"/>
<dbReference type="EC" id="7.1.1.-" evidence="1"/>
<dbReference type="EMBL" id="BA000045">
    <property type="protein sequence ID" value="BAC90324.1"/>
    <property type="molecule type" value="Genomic_DNA"/>
</dbReference>
<dbReference type="RefSeq" id="NP_925329.1">
    <property type="nucleotide sequence ID" value="NC_005125.1"/>
</dbReference>
<dbReference type="RefSeq" id="WP_011142379.1">
    <property type="nucleotide sequence ID" value="NC_005125.1"/>
</dbReference>
<dbReference type="SMR" id="Q7NI01"/>
<dbReference type="FunCoup" id="Q7NI01">
    <property type="interactions" value="229"/>
</dbReference>
<dbReference type="STRING" id="251221.gene:10759880"/>
<dbReference type="EnsemblBacteria" id="BAC90324">
    <property type="protein sequence ID" value="BAC90324"/>
    <property type="gene ID" value="BAC90324"/>
</dbReference>
<dbReference type="KEGG" id="gvi:gll2383"/>
<dbReference type="PATRIC" id="fig|251221.4.peg.2422"/>
<dbReference type="eggNOG" id="COG0649">
    <property type="taxonomic scope" value="Bacteria"/>
</dbReference>
<dbReference type="HOGENOM" id="CLU_015134_1_2_3"/>
<dbReference type="InParanoid" id="Q7NI01"/>
<dbReference type="OrthoDB" id="9801496at2"/>
<dbReference type="PhylomeDB" id="Q7NI01"/>
<dbReference type="Proteomes" id="UP000000557">
    <property type="component" value="Chromosome"/>
</dbReference>
<dbReference type="GO" id="GO:0005886">
    <property type="term" value="C:plasma membrane"/>
    <property type="evidence" value="ECO:0007669"/>
    <property type="project" value="UniProtKB-SubCell"/>
</dbReference>
<dbReference type="GO" id="GO:0051287">
    <property type="term" value="F:NAD binding"/>
    <property type="evidence" value="ECO:0007669"/>
    <property type="project" value="InterPro"/>
</dbReference>
<dbReference type="GO" id="GO:0016655">
    <property type="term" value="F:oxidoreductase activity, acting on NAD(P)H, quinone or similar compound as acceptor"/>
    <property type="evidence" value="ECO:0007669"/>
    <property type="project" value="UniProtKB-UniRule"/>
</dbReference>
<dbReference type="GO" id="GO:0048038">
    <property type="term" value="F:quinone binding"/>
    <property type="evidence" value="ECO:0007669"/>
    <property type="project" value="UniProtKB-KW"/>
</dbReference>
<dbReference type="GO" id="GO:0019684">
    <property type="term" value="P:photosynthesis, light reaction"/>
    <property type="evidence" value="ECO:0007669"/>
    <property type="project" value="UniProtKB-UniRule"/>
</dbReference>
<dbReference type="Gene3D" id="1.10.645.10">
    <property type="entry name" value="Cytochrome-c3 Hydrogenase, chain B"/>
    <property type="match status" value="1"/>
</dbReference>
<dbReference type="HAMAP" id="MF_01358">
    <property type="entry name" value="NDH1_NuoD"/>
    <property type="match status" value="1"/>
</dbReference>
<dbReference type="InterPro" id="IPR001135">
    <property type="entry name" value="NADH_Q_OxRdtase_suD"/>
</dbReference>
<dbReference type="InterPro" id="IPR014029">
    <property type="entry name" value="NADH_UbQ_OxRdtase_49kDa_CS"/>
</dbReference>
<dbReference type="InterPro" id="IPR022885">
    <property type="entry name" value="NDH1_su_D/H"/>
</dbReference>
<dbReference type="InterPro" id="IPR029014">
    <property type="entry name" value="NiFe-Hase_large"/>
</dbReference>
<dbReference type="NCBIfam" id="TIGR01962">
    <property type="entry name" value="NuoD"/>
    <property type="match status" value="1"/>
</dbReference>
<dbReference type="NCBIfam" id="NF004739">
    <property type="entry name" value="PRK06075.1"/>
    <property type="match status" value="1"/>
</dbReference>
<dbReference type="NCBIfam" id="NF005649">
    <property type="entry name" value="PRK07415.1"/>
    <property type="match status" value="1"/>
</dbReference>
<dbReference type="PANTHER" id="PTHR11993:SF10">
    <property type="entry name" value="NADH DEHYDROGENASE [UBIQUINONE] IRON-SULFUR PROTEIN 2, MITOCHONDRIAL"/>
    <property type="match status" value="1"/>
</dbReference>
<dbReference type="PANTHER" id="PTHR11993">
    <property type="entry name" value="NADH-UBIQUINONE OXIDOREDUCTASE 49 KDA SUBUNIT"/>
    <property type="match status" value="1"/>
</dbReference>
<dbReference type="Pfam" id="PF00346">
    <property type="entry name" value="Complex1_49kDa"/>
    <property type="match status" value="1"/>
</dbReference>
<dbReference type="SUPFAM" id="SSF56762">
    <property type="entry name" value="HydB/Nqo4-like"/>
    <property type="match status" value="1"/>
</dbReference>
<dbReference type="PROSITE" id="PS00535">
    <property type="entry name" value="COMPLEX1_49K"/>
    <property type="match status" value="1"/>
</dbReference>
<reference key="1">
    <citation type="journal article" date="2003" name="DNA Res.">
        <title>Complete genome structure of Gloeobacter violaceus PCC 7421, a cyanobacterium that lacks thylakoids.</title>
        <authorList>
            <person name="Nakamura Y."/>
            <person name="Kaneko T."/>
            <person name="Sato S."/>
            <person name="Mimuro M."/>
            <person name="Miyashita H."/>
            <person name="Tsuchiya T."/>
            <person name="Sasamoto S."/>
            <person name="Watanabe A."/>
            <person name="Kawashima K."/>
            <person name="Kishida Y."/>
            <person name="Kiyokawa C."/>
            <person name="Kohara M."/>
            <person name="Matsumoto M."/>
            <person name="Matsuno A."/>
            <person name="Nakazaki N."/>
            <person name="Shimpo S."/>
            <person name="Takeuchi C."/>
            <person name="Yamada M."/>
            <person name="Tabata S."/>
        </authorList>
    </citation>
    <scope>NUCLEOTIDE SEQUENCE [LARGE SCALE GENOMIC DNA]</scope>
    <source>
        <strain>ATCC 29082 / PCC 7421</strain>
    </source>
</reference>
<comment type="function">
    <text evidence="1">NDH-1 shuttles electrons from an unknown electron donor, via FMN and iron-sulfur (Fe-S) centers, to quinones in the respiratory and/or the photosynthetic chain. The immediate electron acceptor for the enzyme in this species is believed to be plastoquinone. Couples the redox reaction to proton translocation, and thus conserves the redox energy in a proton gradient. Cyanobacterial NDH-1 also plays a role in inorganic carbon-concentration.</text>
</comment>
<comment type="catalytic activity">
    <reaction evidence="1">
        <text>a plastoquinone + NADH + (n+1) H(+)(in) = a plastoquinol + NAD(+) + n H(+)(out)</text>
        <dbReference type="Rhea" id="RHEA:42608"/>
        <dbReference type="Rhea" id="RHEA-COMP:9561"/>
        <dbReference type="Rhea" id="RHEA-COMP:9562"/>
        <dbReference type="ChEBI" id="CHEBI:15378"/>
        <dbReference type="ChEBI" id="CHEBI:17757"/>
        <dbReference type="ChEBI" id="CHEBI:57540"/>
        <dbReference type="ChEBI" id="CHEBI:57945"/>
        <dbReference type="ChEBI" id="CHEBI:62192"/>
    </reaction>
</comment>
<comment type="catalytic activity">
    <reaction evidence="1">
        <text>a plastoquinone + NADPH + (n+1) H(+)(in) = a plastoquinol + NADP(+) + n H(+)(out)</text>
        <dbReference type="Rhea" id="RHEA:42612"/>
        <dbReference type="Rhea" id="RHEA-COMP:9561"/>
        <dbReference type="Rhea" id="RHEA-COMP:9562"/>
        <dbReference type="ChEBI" id="CHEBI:15378"/>
        <dbReference type="ChEBI" id="CHEBI:17757"/>
        <dbReference type="ChEBI" id="CHEBI:57783"/>
        <dbReference type="ChEBI" id="CHEBI:58349"/>
        <dbReference type="ChEBI" id="CHEBI:62192"/>
    </reaction>
</comment>
<comment type="subunit">
    <text evidence="1">NDH-1 can be composed of about 15 different subunits; different subcomplexes with different compositions have been identified which probably have different functions.</text>
</comment>
<comment type="subcellular location">
    <subcellularLocation>
        <location evidence="1">Cell inner membrane</location>
        <topology evidence="1">Peripheral membrane protein</topology>
        <orientation evidence="1">Cytoplasmic side</orientation>
    </subcellularLocation>
</comment>
<comment type="similarity">
    <text evidence="1">Belongs to the complex I 49 kDa subunit family.</text>
</comment>
<sequence length="394" mass="44893">MVTIETRADQMVLNLGPHHPSTHGVLRLIVTLDGENVVDCRPVLGYLHRGMEKIGENRTIIQYLPYCSRWDYAAAMMNEAPVVNAPEAMAGVKVPRRASYIRVIMLELSRIANHLLWVGPFLLDMGAQSPFFYILRERELILDLFEAATGLRMVGNNYFRVGGVTVDLPYGWVDKAHDLCDVIPGKIDEYERLITNNPIFRRRIENLGYISREDAINWGLSGPMLRASGVKWDLRKVDHYEIYDELDWDIAWDTGGDCLARYIVRIKEMRESVKIIRQALDQLPGGPYEQLEARRLAEGPKSEWNSFDYQFIGKKSSPTFKIPTGEYYARSEEAKGELGIYVVGRDDTTPWRWKIRTPDFANLAILPMILQGTKVADLVVVLGSIDIIMGSVDR</sequence>
<protein>
    <recommendedName>
        <fullName evidence="1">NAD(P)H-quinone oxidoreductase subunit H 2</fullName>
        <ecNumber evidence="1">7.1.1.-</ecNumber>
    </recommendedName>
    <alternativeName>
        <fullName>NAD(P)H dehydrogenase subunit H 2</fullName>
    </alternativeName>
    <alternativeName>
        <fullName evidence="1">NADH-plastoquinone oxidoreductase subunit H 2</fullName>
    </alternativeName>
    <alternativeName>
        <fullName evidence="1">NDH-1 subunit H 2</fullName>
        <shortName evidence="1">NDH-H 2</shortName>
    </alternativeName>
</protein>